<accession>Q9ZNX6</accession>
<organism>
    <name type="scientific">Medicago truncatula</name>
    <name type="common">Barrel medic</name>
    <name type="synonym">Medicago tribuloides</name>
    <dbReference type="NCBI Taxonomy" id="3880"/>
    <lineage>
        <taxon>Eukaryota</taxon>
        <taxon>Viridiplantae</taxon>
        <taxon>Streptophyta</taxon>
        <taxon>Embryophyta</taxon>
        <taxon>Tracheophyta</taxon>
        <taxon>Spermatophyta</taxon>
        <taxon>Magnoliopsida</taxon>
        <taxon>eudicotyledons</taxon>
        <taxon>Gunneridae</taxon>
        <taxon>Pentapetalae</taxon>
        <taxon>rosids</taxon>
        <taxon>fabids</taxon>
        <taxon>Fabales</taxon>
        <taxon>Fabaceae</taxon>
        <taxon>Papilionoideae</taxon>
        <taxon>50 kb inversion clade</taxon>
        <taxon>NPAAA clade</taxon>
        <taxon>Hologalegina</taxon>
        <taxon>IRL clade</taxon>
        <taxon>Trifolieae</taxon>
        <taxon>Medicago</taxon>
    </lineage>
</organism>
<evidence type="ECO:0000250" key="1"/>
<evidence type="ECO:0000255" key="2"/>
<evidence type="ECO:0000305" key="3"/>
<comment type="catalytic activity">
    <reaction>
        <text>L-cysteine + L-glutamate + ATP = gamma-L-glutamyl-L-cysteine + ADP + phosphate + H(+)</text>
        <dbReference type="Rhea" id="RHEA:13285"/>
        <dbReference type="ChEBI" id="CHEBI:15378"/>
        <dbReference type="ChEBI" id="CHEBI:29985"/>
        <dbReference type="ChEBI" id="CHEBI:30616"/>
        <dbReference type="ChEBI" id="CHEBI:35235"/>
        <dbReference type="ChEBI" id="CHEBI:43474"/>
        <dbReference type="ChEBI" id="CHEBI:58173"/>
        <dbReference type="ChEBI" id="CHEBI:456216"/>
        <dbReference type="EC" id="6.3.2.2"/>
    </reaction>
</comment>
<comment type="pathway">
    <text>Sulfur metabolism; glutathione biosynthesis; glutathione from L-cysteine and L-glutamate: step 1/2.</text>
</comment>
<comment type="subunit">
    <text evidence="1">Homodimer or monomer when oxidized or reduced, respectively.</text>
</comment>
<comment type="subcellular location">
    <subcellularLocation>
        <location evidence="1">Plastid</location>
        <location evidence="1">Chloroplast</location>
    </subcellularLocation>
</comment>
<comment type="PTM">
    <text evidence="1">The Cys-172-Cys-392 disulfide bridge is known to modulate the enzyme activity according to the redox status. The oxidized form constitutes the active enzyme (By similarity).</text>
</comment>
<comment type="similarity">
    <text evidence="3">Belongs to the carboxylate-amine ligase family. Glutamate--cysteine ligase type 2 subfamily.</text>
</comment>
<sequence length="508" mass="57677">MTTIFRLASSSSPSLRHDATPHNFHIRKTSISNTFSFSSKNSLSFKRILTSGGSRRFIVAASPPTEDAVVATEPLTKQDLIDYLASGCKTKDKWRIGTEHEKFGFELGSLRPMKYEQISELLNGIAERFDWDKVMEGDNIIGLKQGKQSISLEPGGQFELSGAPLETLHQTCAEVNSHLYQVKAVAEEMGIGFLGIGFQPKWERKDIPMMPKGRYEIMKKYMPKVGSLGLDMMFRTCTVQVNLDFSSEADMIRKFRAGLALQPIATALFANSPFTDGKPNGFVSMRSHIWTDTDKDRTGMLPFVFDDSFGFEQYVDFALDVPMYFVYRKKKYIDCTGMTFRDFLAGKLPCIPGELPTLNDWENHLTTIFPEVRLKRYLEMRGADGGPWRRLCALPAFWVGILYDEVSLQRVLDMTADWTLEEREMLRNKVTVTGLKTPFRDGLLKHVAEEVLELAKDGLERRGFKESGFLNAVAEVVRTGVTPAERLLELYHGKWEQSVDHVFDELLY</sequence>
<name>GSH1_MEDTR</name>
<keyword id="KW-0067">ATP-binding</keyword>
<keyword id="KW-0150">Chloroplast</keyword>
<keyword id="KW-1015">Disulfide bond</keyword>
<keyword id="KW-0317">Glutathione biosynthesis</keyword>
<keyword id="KW-0436">Ligase</keyword>
<keyword id="KW-0547">Nucleotide-binding</keyword>
<keyword id="KW-0934">Plastid</keyword>
<keyword id="KW-0809">Transit peptide</keyword>
<gene>
    <name type="primary">GSH1</name>
</gene>
<proteinExistence type="evidence at transcript level"/>
<dbReference type="EC" id="6.3.2.2"/>
<dbReference type="EMBL" id="AF041340">
    <property type="protein sequence ID" value="AAC82334.1"/>
    <property type="molecule type" value="mRNA"/>
</dbReference>
<dbReference type="SMR" id="Q9ZNX6"/>
<dbReference type="PaxDb" id="3880-AET04988"/>
<dbReference type="EnsemblPlants" id="rna49903">
    <property type="protein sequence ID" value="RHN43345.1"/>
    <property type="gene ID" value="gene49903"/>
</dbReference>
<dbReference type="GeneID" id="11441054"/>
<dbReference type="Gramene" id="rna49903">
    <property type="protein sequence ID" value="RHN43345.1"/>
    <property type="gene ID" value="gene49903"/>
</dbReference>
<dbReference type="KEGG" id="mtr:11441054"/>
<dbReference type="eggNOG" id="ENOG502QVEN">
    <property type="taxonomic scope" value="Eukaryota"/>
</dbReference>
<dbReference type="HOGENOM" id="CLU_026610_0_0_1"/>
<dbReference type="OMA" id="WADHLTT"/>
<dbReference type="OrthoDB" id="2012853at2759"/>
<dbReference type="UniPathway" id="UPA00142">
    <property type="reaction ID" value="UER00209"/>
</dbReference>
<dbReference type="ExpressionAtlas" id="Q9ZNX6">
    <property type="expression patterns" value="differential"/>
</dbReference>
<dbReference type="GO" id="GO:0009507">
    <property type="term" value="C:chloroplast"/>
    <property type="evidence" value="ECO:0007669"/>
    <property type="project" value="UniProtKB-SubCell"/>
</dbReference>
<dbReference type="GO" id="GO:0005524">
    <property type="term" value="F:ATP binding"/>
    <property type="evidence" value="ECO:0007669"/>
    <property type="project" value="UniProtKB-KW"/>
</dbReference>
<dbReference type="GO" id="GO:0004357">
    <property type="term" value="F:glutamate-cysteine ligase activity"/>
    <property type="evidence" value="ECO:0007669"/>
    <property type="project" value="UniProtKB-EC"/>
</dbReference>
<dbReference type="GO" id="GO:0006750">
    <property type="term" value="P:glutathione biosynthetic process"/>
    <property type="evidence" value="ECO:0007669"/>
    <property type="project" value="UniProtKB-UniPathway"/>
</dbReference>
<dbReference type="FunFam" id="3.30.590.20:FF:000003">
    <property type="entry name" value="Glutamate--cysteine ligase"/>
    <property type="match status" value="1"/>
</dbReference>
<dbReference type="Gene3D" id="3.30.590.20">
    <property type="match status" value="1"/>
</dbReference>
<dbReference type="InterPro" id="IPR035434">
    <property type="entry name" value="GCL_bact_plant"/>
</dbReference>
<dbReference type="InterPro" id="IPR006336">
    <property type="entry name" value="GCS2"/>
</dbReference>
<dbReference type="InterPro" id="IPR014746">
    <property type="entry name" value="Gln_synth/guanido_kin_cat_dom"/>
</dbReference>
<dbReference type="InterPro" id="IPR011556">
    <property type="entry name" value="Glut_cys_lig_pln_type"/>
</dbReference>
<dbReference type="NCBIfam" id="TIGR01436">
    <property type="entry name" value="glu_cys_lig_pln"/>
    <property type="match status" value="1"/>
</dbReference>
<dbReference type="PANTHER" id="PTHR34378">
    <property type="entry name" value="GLUTAMATE--CYSTEINE LIGASE, CHLOROPLASTIC"/>
    <property type="match status" value="1"/>
</dbReference>
<dbReference type="PANTHER" id="PTHR34378:SF1">
    <property type="entry name" value="GLUTAMATE--CYSTEINE LIGASE, CHLOROPLASTIC"/>
    <property type="match status" value="1"/>
</dbReference>
<dbReference type="Pfam" id="PF04107">
    <property type="entry name" value="GCS2"/>
    <property type="match status" value="1"/>
</dbReference>
<dbReference type="PIRSF" id="PIRSF017901">
    <property type="entry name" value="GCL"/>
    <property type="match status" value="1"/>
</dbReference>
<dbReference type="SUPFAM" id="SSF55931">
    <property type="entry name" value="Glutamine synthetase/guanido kinase"/>
    <property type="match status" value="1"/>
</dbReference>
<feature type="transit peptide" description="Chloroplast" evidence="2">
    <location>
        <begin position="1"/>
        <end position="59"/>
    </location>
</feature>
<feature type="chain" id="PRO_0000013057" description="Glutamate--cysteine ligase, chloroplastic">
    <location>
        <begin position="60"/>
        <end position="508"/>
    </location>
</feature>
<feature type="disulfide bond" evidence="1">
    <location>
        <begin position="172"/>
        <end position="392"/>
    </location>
</feature>
<feature type="disulfide bond" evidence="1">
    <location>
        <begin position="335"/>
        <end position="350"/>
    </location>
</feature>
<reference key="1">
    <citation type="journal article" date="1999" name="Free Radic. Res.">
        <title>Characterisation of a cDNA encoding gamma-glutamylcysteine synthetase in Medicago truncatula.</title>
        <authorList>
            <person name="Frendo P."/>
            <person name="Mathieu C."/>
            <person name="Van de Sype G."/>
            <person name="Herouart D."/>
            <person name="Puppo A."/>
        </authorList>
    </citation>
    <scope>NUCLEOTIDE SEQUENCE [MRNA]</scope>
</reference>
<protein>
    <recommendedName>
        <fullName>Glutamate--cysteine ligase, chloroplastic</fullName>
        <ecNumber>6.3.2.2</ecNumber>
    </recommendedName>
    <alternativeName>
        <fullName>Gamma-ECS</fullName>
        <shortName>GCS</shortName>
    </alternativeName>
    <alternativeName>
        <fullName>Gamma-glutamylcysteine synthetase</fullName>
    </alternativeName>
</protein>